<organism>
    <name type="scientific">Oleidesulfovibrio alaskensis (strain ATCC BAA-1058 / DSM 17464 / G20)</name>
    <name type="common">Desulfovibrio alaskensis</name>
    <dbReference type="NCBI Taxonomy" id="207559"/>
    <lineage>
        <taxon>Bacteria</taxon>
        <taxon>Pseudomonadati</taxon>
        <taxon>Thermodesulfobacteriota</taxon>
        <taxon>Desulfovibrionia</taxon>
        <taxon>Desulfovibrionales</taxon>
        <taxon>Desulfovibrionaceae</taxon>
        <taxon>Oleidesulfovibrio</taxon>
    </lineage>
</organism>
<reference key="1">
    <citation type="journal article" date="2011" name="J. Bacteriol.">
        <title>Complete genome sequence and updated annotation of Desulfovibrio alaskensis G20.</title>
        <authorList>
            <person name="Hauser L.J."/>
            <person name="Land M.L."/>
            <person name="Brown S.D."/>
            <person name="Larimer F."/>
            <person name="Keller K.L."/>
            <person name="Rapp-Giles B.J."/>
            <person name="Price M.N."/>
            <person name="Lin M."/>
            <person name="Bruce D.C."/>
            <person name="Detter J.C."/>
            <person name="Tapia R."/>
            <person name="Han C.S."/>
            <person name="Goodwin L.A."/>
            <person name="Cheng J.F."/>
            <person name="Pitluck S."/>
            <person name="Copeland A."/>
            <person name="Lucas S."/>
            <person name="Nolan M."/>
            <person name="Lapidus A.L."/>
            <person name="Palumbo A.V."/>
            <person name="Wall J.D."/>
        </authorList>
    </citation>
    <scope>NUCLEOTIDE SEQUENCE [LARGE SCALE GENOMIC DNA]</scope>
    <source>
        <strain>ATCC BAA-1058 / DSM 17464 / G20</strain>
    </source>
</reference>
<gene>
    <name evidence="1" type="primary">atpH</name>
    <name type="ordered locus">Dde_0988</name>
</gene>
<accession>Q313V7</accession>
<keyword id="KW-0066">ATP synthesis</keyword>
<keyword id="KW-0997">Cell inner membrane</keyword>
<keyword id="KW-1003">Cell membrane</keyword>
<keyword id="KW-0139">CF(1)</keyword>
<keyword id="KW-0375">Hydrogen ion transport</keyword>
<keyword id="KW-0406">Ion transport</keyword>
<keyword id="KW-0472">Membrane</keyword>
<keyword id="KW-1185">Reference proteome</keyword>
<keyword id="KW-0813">Transport</keyword>
<name>ATPD_OLEA2</name>
<protein>
    <recommendedName>
        <fullName evidence="1">ATP synthase subunit delta</fullName>
    </recommendedName>
    <alternativeName>
        <fullName evidence="1">ATP synthase F(1) sector subunit delta</fullName>
    </alternativeName>
    <alternativeName>
        <fullName evidence="1">F-type ATPase subunit delta</fullName>
        <shortName evidence="1">F-ATPase subunit delta</shortName>
    </alternativeName>
</protein>
<proteinExistence type="inferred from homology"/>
<comment type="function">
    <text evidence="1">F(1)F(0) ATP synthase produces ATP from ADP in the presence of a proton or sodium gradient. F-type ATPases consist of two structural domains, F(1) containing the extramembraneous catalytic core and F(0) containing the membrane proton channel, linked together by a central stalk and a peripheral stalk. During catalysis, ATP synthesis in the catalytic domain of F(1) is coupled via a rotary mechanism of the central stalk subunits to proton translocation.</text>
</comment>
<comment type="function">
    <text evidence="1">This protein is part of the stalk that links CF(0) to CF(1). It either transmits conformational changes from CF(0) to CF(1) or is implicated in proton conduction.</text>
</comment>
<comment type="subunit">
    <text evidence="1">F-type ATPases have 2 components, F(1) - the catalytic core - and F(0) - the membrane proton channel. F(1) has five subunits: alpha(3), beta(3), gamma(1), delta(1), epsilon(1). F(0) has three main subunits: a(1), b(2) and c(10-14). The alpha and beta chains form an alternating ring which encloses part of the gamma chain. F(1) is attached to F(0) by a central stalk formed by the gamma and epsilon chains, while a peripheral stalk is formed by the delta and b chains.</text>
</comment>
<comment type="subcellular location">
    <subcellularLocation>
        <location evidence="1">Cell inner membrane</location>
        <topology evidence="1">Peripheral membrane protein</topology>
    </subcellularLocation>
</comment>
<comment type="similarity">
    <text evidence="1">Belongs to the ATPase delta chain family.</text>
</comment>
<dbReference type="EMBL" id="CP000112">
    <property type="protein sequence ID" value="ABB37789.1"/>
    <property type="molecule type" value="Genomic_DNA"/>
</dbReference>
<dbReference type="RefSeq" id="WP_011367030.1">
    <property type="nucleotide sequence ID" value="NC_007519.1"/>
</dbReference>
<dbReference type="SMR" id="Q313V7"/>
<dbReference type="STRING" id="207559.Dde_0988"/>
<dbReference type="KEGG" id="dde:Dde_0988"/>
<dbReference type="eggNOG" id="COG0712">
    <property type="taxonomic scope" value="Bacteria"/>
</dbReference>
<dbReference type="HOGENOM" id="CLU_085114_4_1_7"/>
<dbReference type="Proteomes" id="UP000002710">
    <property type="component" value="Chromosome"/>
</dbReference>
<dbReference type="GO" id="GO:0005886">
    <property type="term" value="C:plasma membrane"/>
    <property type="evidence" value="ECO:0007669"/>
    <property type="project" value="UniProtKB-SubCell"/>
</dbReference>
<dbReference type="GO" id="GO:0045259">
    <property type="term" value="C:proton-transporting ATP synthase complex"/>
    <property type="evidence" value="ECO:0007669"/>
    <property type="project" value="UniProtKB-KW"/>
</dbReference>
<dbReference type="GO" id="GO:0046933">
    <property type="term" value="F:proton-transporting ATP synthase activity, rotational mechanism"/>
    <property type="evidence" value="ECO:0007669"/>
    <property type="project" value="UniProtKB-UniRule"/>
</dbReference>
<dbReference type="Gene3D" id="1.10.520.20">
    <property type="entry name" value="N-terminal domain of the delta subunit of the F1F0-ATP synthase"/>
    <property type="match status" value="1"/>
</dbReference>
<dbReference type="HAMAP" id="MF_01416">
    <property type="entry name" value="ATP_synth_delta_bact"/>
    <property type="match status" value="1"/>
</dbReference>
<dbReference type="InterPro" id="IPR026015">
    <property type="entry name" value="ATP_synth_OSCP/delta_N_sf"/>
</dbReference>
<dbReference type="InterPro" id="IPR020781">
    <property type="entry name" value="ATPase_OSCP/d_CS"/>
</dbReference>
<dbReference type="InterPro" id="IPR000711">
    <property type="entry name" value="ATPase_OSCP/dsu"/>
</dbReference>
<dbReference type="NCBIfam" id="TIGR01145">
    <property type="entry name" value="ATP_synt_delta"/>
    <property type="match status" value="1"/>
</dbReference>
<dbReference type="PANTHER" id="PTHR11910">
    <property type="entry name" value="ATP SYNTHASE DELTA CHAIN"/>
    <property type="match status" value="1"/>
</dbReference>
<dbReference type="Pfam" id="PF00213">
    <property type="entry name" value="OSCP"/>
    <property type="match status" value="1"/>
</dbReference>
<dbReference type="PRINTS" id="PR00125">
    <property type="entry name" value="ATPASEDELTA"/>
</dbReference>
<dbReference type="SUPFAM" id="SSF47928">
    <property type="entry name" value="N-terminal domain of the delta subunit of the F1F0-ATP synthase"/>
    <property type="match status" value="1"/>
</dbReference>
<dbReference type="PROSITE" id="PS00389">
    <property type="entry name" value="ATPASE_DELTA"/>
    <property type="match status" value="1"/>
</dbReference>
<feature type="chain" id="PRO_1000184691" description="ATP synthase subunit delta">
    <location>
        <begin position="1"/>
        <end position="183"/>
    </location>
</feature>
<sequence>MTGNIAARRYARALFAIGQKQGLAELDAFGSELSAVAKAVEESPALARLFRNPLFSIEEKRAVLAKLLQAAGAGQTVSNFCNLLADKGRLADLPDINAFYSLLLDAEKGIIRGELVTAIKLAKAKRDAVKEQLEKQAGQKIELNFSVDKDILGGVVLKVGDRVLDASLRAQLGILKDNIKRGE</sequence>
<evidence type="ECO:0000255" key="1">
    <source>
        <dbReference type="HAMAP-Rule" id="MF_01416"/>
    </source>
</evidence>